<reference key="1">
    <citation type="journal article" date="2013" name="Nature">
        <title>The zebrafish reference genome sequence and its relationship to the human genome.</title>
        <authorList>
            <person name="Howe K."/>
            <person name="Clark M.D."/>
            <person name="Torroja C.F."/>
            <person name="Torrance J."/>
            <person name="Berthelot C."/>
            <person name="Muffato M."/>
            <person name="Collins J.E."/>
            <person name="Humphray S."/>
            <person name="McLaren K."/>
            <person name="Matthews L."/>
            <person name="McLaren S."/>
            <person name="Sealy I."/>
            <person name="Caccamo M."/>
            <person name="Churcher C."/>
            <person name="Scott C."/>
            <person name="Barrett J.C."/>
            <person name="Koch R."/>
            <person name="Rauch G.J."/>
            <person name="White S."/>
            <person name="Chow W."/>
            <person name="Kilian B."/>
            <person name="Quintais L.T."/>
            <person name="Guerra-Assuncao J.A."/>
            <person name="Zhou Y."/>
            <person name="Gu Y."/>
            <person name="Yen J."/>
            <person name="Vogel J.H."/>
            <person name="Eyre T."/>
            <person name="Redmond S."/>
            <person name="Banerjee R."/>
            <person name="Chi J."/>
            <person name="Fu B."/>
            <person name="Langley E."/>
            <person name="Maguire S.F."/>
            <person name="Laird G.K."/>
            <person name="Lloyd D."/>
            <person name="Kenyon E."/>
            <person name="Donaldson S."/>
            <person name="Sehra H."/>
            <person name="Almeida-King J."/>
            <person name="Loveland J."/>
            <person name="Trevanion S."/>
            <person name="Jones M."/>
            <person name="Quail M."/>
            <person name="Willey D."/>
            <person name="Hunt A."/>
            <person name="Burton J."/>
            <person name="Sims S."/>
            <person name="McLay K."/>
            <person name="Plumb B."/>
            <person name="Davis J."/>
            <person name="Clee C."/>
            <person name="Oliver K."/>
            <person name="Clark R."/>
            <person name="Riddle C."/>
            <person name="Elliot D."/>
            <person name="Threadgold G."/>
            <person name="Harden G."/>
            <person name="Ware D."/>
            <person name="Begum S."/>
            <person name="Mortimore B."/>
            <person name="Kerry G."/>
            <person name="Heath P."/>
            <person name="Phillimore B."/>
            <person name="Tracey A."/>
            <person name="Corby N."/>
            <person name="Dunn M."/>
            <person name="Johnson C."/>
            <person name="Wood J."/>
            <person name="Clark S."/>
            <person name="Pelan S."/>
            <person name="Griffiths G."/>
            <person name="Smith M."/>
            <person name="Glithero R."/>
            <person name="Howden P."/>
            <person name="Barker N."/>
            <person name="Lloyd C."/>
            <person name="Stevens C."/>
            <person name="Harley J."/>
            <person name="Holt K."/>
            <person name="Panagiotidis G."/>
            <person name="Lovell J."/>
            <person name="Beasley H."/>
            <person name="Henderson C."/>
            <person name="Gordon D."/>
            <person name="Auger K."/>
            <person name="Wright D."/>
            <person name="Collins J."/>
            <person name="Raisen C."/>
            <person name="Dyer L."/>
            <person name="Leung K."/>
            <person name="Robertson L."/>
            <person name="Ambridge K."/>
            <person name="Leongamornlert D."/>
            <person name="McGuire S."/>
            <person name="Gilderthorp R."/>
            <person name="Griffiths C."/>
            <person name="Manthravadi D."/>
            <person name="Nichol S."/>
            <person name="Barker G."/>
            <person name="Whitehead S."/>
            <person name="Kay M."/>
            <person name="Brown J."/>
            <person name="Murnane C."/>
            <person name="Gray E."/>
            <person name="Humphries M."/>
            <person name="Sycamore N."/>
            <person name="Barker D."/>
            <person name="Saunders D."/>
            <person name="Wallis J."/>
            <person name="Babbage A."/>
            <person name="Hammond S."/>
            <person name="Mashreghi-Mohammadi M."/>
            <person name="Barr L."/>
            <person name="Martin S."/>
            <person name="Wray P."/>
            <person name="Ellington A."/>
            <person name="Matthews N."/>
            <person name="Ellwood M."/>
            <person name="Woodmansey R."/>
            <person name="Clark G."/>
            <person name="Cooper J."/>
            <person name="Tromans A."/>
            <person name="Grafham D."/>
            <person name="Skuce C."/>
            <person name="Pandian R."/>
            <person name="Andrews R."/>
            <person name="Harrison E."/>
            <person name="Kimberley A."/>
            <person name="Garnett J."/>
            <person name="Fosker N."/>
            <person name="Hall R."/>
            <person name="Garner P."/>
            <person name="Kelly D."/>
            <person name="Bird C."/>
            <person name="Palmer S."/>
            <person name="Gehring I."/>
            <person name="Berger A."/>
            <person name="Dooley C.M."/>
            <person name="Ersan-Urun Z."/>
            <person name="Eser C."/>
            <person name="Geiger H."/>
            <person name="Geisler M."/>
            <person name="Karotki L."/>
            <person name="Kirn A."/>
            <person name="Konantz J."/>
            <person name="Konantz M."/>
            <person name="Oberlander M."/>
            <person name="Rudolph-Geiger S."/>
            <person name="Teucke M."/>
            <person name="Lanz C."/>
            <person name="Raddatz G."/>
            <person name="Osoegawa K."/>
            <person name="Zhu B."/>
            <person name="Rapp A."/>
            <person name="Widaa S."/>
            <person name="Langford C."/>
            <person name="Yang F."/>
            <person name="Schuster S.C."/>
            <person name="Carter N.P."/>
            <person name="Harrow J."/>
            <person name="Ning Z."/>
            <person name="Herrero J."/>
            <person name="Searle S.M."/>
            <person name="Enright A."/>
            <person name="Geisler R."/>
            <person name="Plasterk R.H."/>
            <person name="Lee C."/>
            <person name="Westerfield M."/>
            <person name="de Jong P.J."/>
            <person name="Zon L.I."/>
            <person name="Postlethwait J.H."/>
            <person name="Nusslein-Volhard C."/>
            <person name="Hubbard T.J."/>
            <person name="Roest Crollius H."/>
            <person name="Rogers J."/>
            <person name="Stemple D.L."/>
        </authorList>
    </citation>
    <scope>NUCLEOTIDE SEQUENCE [LARGE SCALE GENOMIC DNA]</scope>
    <source>
        <strain>Tuebingen</strain>
    </source>
</reference>
<reference key="2">
    <citation type="submission" date="2004-07" db="EMBL/GenBank/DDBJ databases">
        <authorList>
            <consortium name="NIH - Zebrafish Gene Collection (ZGC) project"/>
        </authorList>
    </citation>
    <scope>NUCLEOTIDE SEQUENCE [LARGE SCALE MRNA]</scope>
    <source>
        <tissue>Embryo</tissue>
    </source>
</reference>
<keyword id="KW-0966">Cell projection</keyword>
<keyword id="KW-0969">Cilium</keyword>
<keyword id="KW-0970">Cilium biogenesis/degradation</keyword>
<keyword id="KW-0175">Coiled coil</keyword>
<keyword id="KW-0963">Cytoplasm</keyword>
<keyword id="KW-0206">Cytoskeleton</keyword>
<keyword id="KW-0221">Differentiation</keyword>
<keyword id="KW-0282">Flagellum</keyword>
<keyword id="KW-0472">Membrane</keyword>
<keyword id="KW-0496">Mitochondrion</keyword>
<keyword id="KW-0999">Mitochondrion inner membrane</keyword>
<keyword id="KW-0539">Nucleus</keyword>
<keyword id="KW-1185">Reference proteome</keyword>
<keyword id="KW-0744">Spermatogenesis</keyword>
<keyword id="KW-0809">Transit peptide</keyword>
<name>CBAR1_DANRE</name>
<comment type="function">
    <text evidence="1 2">Plays a critical role in regulating mitochondrial ultrastructure and function by maintaining the integrity of mitochondrial morphology, particularly the organization of cristae (By similarity). Plays a crucial role in ciliogenesis (By similarity). Plays a key role in the correct positioning of the annulus, a septin-based ring structure in the sperm flagellum, serving both as a physical barrier and a membrane diffusion barrier that separates the midpiece (MP) from the principal piece (PP) (By similarity).</text>
</comment>
<comment type="subcellular location">
    <subcellularLocation>
        <location evidence="1">Cytoplasm</location>
    </subcellularLocation>
    <subcellularLocation>
        <location evidence="1">Cytoplasm</location>
        <location evidence="1">Cytoskeleton</location>
        <location evidence="1">Microtubule organizing center</location>
        <location evidence="1">Centrosome</location>
        <location evidence="1">Centriole</location>
    </subcellularLocation>
    <subcellularLocation>
        <location evidence="2">Cell projection</location>
        <location evidence="2">Cilium</location>
    </subcellularLocation>
    <subcellularLocation>
        <location evidence="1">Nucleus</location>
    </subcellularLocation>
    <subcellularLocation>
        <location evidence="1">Mitochondrion inner membrane</location>
        <topology evidence="1">Peripheral membrane protein</topology>
        <orientation evidence="1">Matrix side</orientation>
    </subcellularLocation>
    <subcellularLocation>
        <location evidence="2">Cell projection</location>
        <location evidence="2">Cilium</location>
        <location evidence="2">Flagellum</location>
    </subcellularLocation>
</comment>
<comment type="domain">
    <text evidence="1">The BAR-like domain displays limited similarity to other BAR domains.</text>
</comment>
<comment type="similarity">
    <text evidence="5">Belongs to the CIBAR family.</text>
</comment>
<accession>Q1LU86</accession>
<accession>Q6DC30</accession>
<feature type="transit peptide" description="Mitochondrion" evidence="1">
    <location>
        <begin position="1"/>
        <end position="49"/>
    </location>
</feature>
<feature type="chain" id="PRO_0000287082" description="CBY1-interacting BAR domain-containing protein 1">
    <location>
        <begin position="50"/>
        <end position="295"/>
    </location>
</feature>
<feature type="region of interest" description="BAR-like" evidence="1">
    <location>
        <begin position="12"/>
        <end position="222"/>
    </location>
</feature>
<feature type="region of interest" description="Disordered" evidence="4">
    <location>
        <begin position="243"/>
        <end position="295"/>
    </location>
</feature>
<feature type="coiled-coil region" evidence="3">
    <location>
        <begin position="111"/>
        <end position="185"/>
    </location>
</feature>
<feature type="compositionally biased region" description="Polar residues" evidence="4">
    <location>
        <begin position="243"/>
        <end position="265"/>
    </location>
</feature>
<feature type="compositionally biased region" description="Acidic residues" evidence="4">
    <location>
        <begin position="273"/>
        <end position="295"/>
    </location>
</feature>
<feature type="sequence conflict" description="In Ref. 2; AAH78261." evidence="5" ref="2">
    <original>T</original>
    <variation>M</variation>
    <location>
        <position position="191"/>
    </location>
</feature>
<proteinExistence type="evidence at transcript level"/>
<protein>
    <recommendedName>
        <fullName>CBY1-interacting BAR domain-containing protein 1</fullName>
    </recommendedName>
</protein>
<organism>
    <name type="scientific">Danio rerio</name>
    <name type="common">Zebrafish</name>
    <name type="synonym">Brachydanio rerio</name>
    <dbReference type="NCBI Taxonomy" id="7955"/>
    <lineage>
        <taxon>Eukaryota</taxon>
        <taxon>Metazoa</taxon>
        <taxon>Chordata</taxon>
        <taxon>Craniata</taxon>
        <taxon>Vertebrata</taxon>
        <taxon>Euteleostomi</taxon>
        <taxon>Actinopterygii</taxon>
        <taxon>Neopterygii</taxon>
        <taxon>Teleostei</taxon>
        <taxon>Ostariophysi</taxon>
        <taxon>Cypriniformes</taxon>
        <taxon>Danionidae</taxon>
        <taxon>Danioninae</taxon>
        <taxon>Danio</taxon>
    </lineage>
</organism>
<sequence length="295" mass="34378">MMSRTPDARARDTQTKQIQENITSVEKHFGDLCQLFAAYVRKTARLRDKADLLVKEINVYADTETPNLKCGLKNFADQLAKVQDYRQAEVERLEVKVIEPLKAYGNIVKTKREDLKQTQSARNREAKQMQQLERMRQRNPSDRQIISQAESELQRATMDATRTTRQLEETIDDFEKQKIRDIKKVLGEFVTVEMAFHAKALEIYTTAYQHIQNVDEEGDLEVFRNSLHPPDYQSRLEIVRANSKLSLNRTGTSMSKSGTMQSRTSSRQRKRDDEEDEEEDDEDEDDLEEVTDDEH</sequence>
<dbReference type="EMBL" id="BX957357">
    <property type="protein sequence ID" value="CAK11277.1"/>
    <property type="molecule type" value="Genomic_DNA"/>
</dbReference>
<dbReference type="EMBL" id="BC078261">
    <property type="protein sequence ID" value="AAH78261.1"/>
    <property type="molecule type" value="mRNA"/>
</dbReference>
<dbReference type="RefSeq" id="NP_001003604.1">
    <property type="nucleotide sequence ID" value="NM_001003604.2"/>
</dbReference>
<dbReference type="SMR" id="Q1LU86"/>
<dbReference type="FunCoup" id="Q1LU86">
    <property type="interactions" value="821"/>
</dbReference>
<dbReference type="STRING" id="7955.ENSDARP00000101836"/>
<dbReference type="PaxDb" id="7955-ENSDARP00000006153"/>
<dbReference type="DNASU" id="445210"/>
<dbReference type="Ensembl" id="ENSDART00000114714">
    <property type="protein sequence ID" value="ENSDARP00000101836"/>
    <property type="gene ID" value="ENSDARG00000004436"/>
</dbReference>
<dbReference type="GeneID" id="445210"/>
<dbReference type="KEGG" id="dre:445210"/>
<dbReference type="AGR" id="ZFIN:ZDB-GENE-040801-123"/>
<dbReference type="CTD" id="137392"/>
<dbReference type="ZFIN" id="ZDB-GENE-040801-123">
    <property type="gene designation" value="cibar1"/>
</dbReference>
<dbReference type="eggNOG" id="ENOG502QQ0N">
    <property type="taxonomic scope" value="Eukaryota"/>
</dbReference>
<dbReference type="HOGENOM" id="CLU_072172_1_0_1"/>
<dbReference type="InParanoid" id="Q1LU86"/>
<dbReference type="OrthoDB" id="60621at2759"/>
<dbReference type="PhylomeDB" id="Q1LU86"/>
<dbReference type="TreeFam" id="TF324316"/>
<dbReference type="PRO" id="PR:Q1LU86"/>
<dbReference type="Proteomes" id="UP000000437">
    <property type="component" value="Chromosome 19"/>
</dbReference>
<dbReference type="Bgee" id="ENSDARG00000004436">
    <property type="expression patterns" value="Expressed in testis and 19 other cell types or tissues"/>
</dbReference>
<dbReference type="ExpressionAtlas" id="Q1LU86">
    <property type="expression patterns" value="baseline"/>
</dbReference>
<dbReference type="GO" id="GO:0005814">
    <property type="term" value="C:centriole"/>
    <property type="evidence" value="ECO:0007669"/>
    <property type="project" value="UniProtKB-SubCell"/>
</dbReference>
<dbReference type="GO" id="GO:0036064">
    <property type="term" value="C:ciliary basal body"/>
    <property type="evidence" value="ECO:0000318"/>
    <property type="project" value="GO_Central"/>
</dbReference>
<dbReference type="GO" id="GO:0097546">
    <property type="term" value="C:ciliary base"/>
    <property type="evidence" value="ECO:0000250"/>
    <property type="project" value="UniProtKB"/>
</dbReference>
<dbReference type="GO" id="GO:0035869">
    <property type="term" value="C:ciliary transition zone"/>
    <property type="evidence" value="ECO:0000250"/>
    <property type="project" value="UniProtKB"/>
</dbReference>
<dbReference type="GO" id="GO:0005929">
    <property type="term" value="C:cilium"/>
    <property type="evidence" value="ECO:0000250"/>
    <property type="project" value="UniProtKB"/>
</dbReference>
<dbReference type="GO" id="GO:0005737">
    <property type="term" value="C:cytoplasm"/>
    <property type="evidence" value="ECO:0000250"/>
    <property type="project" value="UniProtKB"/>
</dbReference>
<dbReference type="GO" id="GO:0005743">
    <property type="term" value="C:mitochondrial inner membrane"/>
    <property type="evidence" value="ECO:0000250"/>
    <property type="project" value="UniProtKB"/>
</dbReference>
<dbReference type="GO" id="GO:0005634">
    <property type="term" value="C:nucleus"/>
    <property type="evidence" value="ECO:0000250"/>
    <property type="project" value="UniProtKB"/>
</dbReference>
<dbReference type="GO" id="GO:0097227">
    <property type="term" value="C:sperm annulus"/>
    <property type="evidence" value="ECO:0000250"/>
    <property type="project" value="UniProtKB"/>
</dbReference>
<dbReference type="GO" id="GO:0060271">
    <property type="term" value="P:cilium assembly"/>
    <property type="evidence" value="ECO:0000250"/>
    <property type="project" value="UniProtKB"/>
</dbReference>
<dbReference type="GO" id="GO:0007007">
    <property type="term" value="P:inner mitochondrial membrane organization"/>
    <property type="evidence" value="ECO:0000250"/>
    <property type="project" value="UniProtKB"/>
</dbReference>
<dbReference type="GO" id="GO:0045880">
    <property type="term" value="P:positive regulation of smoothened signaling pathway"/>
    <property type="evidence" value="ECO:0000250"/>
    <property type="project" value="UniProtKB"/>
</dbReference>
<dbReference type="GO" id="GO:0007283">
    <property type="term" value="P:spermatogenesis"/>
    <property type="evidence" value="ECO:0000250"/>
    <property type="project" value="UniProtKB"/>
</dbReference>
<dbReference type="CDD" id="cd07598">
    <property type="entry name" value="BAR_FAM92"/>
    <property type="match status" value="1"/>
</dbReference>
<dbReference type="FunFam" id="1.20.1270.60:FF:000047">
    <property type="entry name" value="protein FAM92A isoform X1"/>
    <property type="match status" value="1"/>
</dbReference>
<dbReference type="Gene3D" id="1.20.1270.60">
    <property type="entry name" value="Arfaptin homology (AH) domain/BAR domain"/>
    <property type="match status" value="1"/>
</dbReference>
<dbReference type="InterPro" id="IPR027267">
    <property type="entry name" value="AH/BAR_dom_sf"/>
</dbReference>
<dbReference type="InterPro" id="IPR035590">
    <property type="entry name" value="BAR_CBAR1/2"/>
</dbReference>
<dbReference type="InterPro" id="IPR009602">
    <property type="entry name" value="CBAR/FAM92"/>
</dbReference>
<dbReference type="PANTHER" id="PTHR21223:SF4">
    <property type="entry name" value="CBY1-INTERACTING BAR DOMAIN-CONTAINING PROTEIN 1"/>
    <property type="match status" value="1"/>
</dbReference>
<dbReference type="PANTHER" id="PTHR21223">
    <property type="entry name" value="CBY1-INTERACTING BAR DOMAIN-CONTAINING PROTEIN HOMOLOG"/>
    <property type="match status" value="1"/>
</dbReference>
<dbReference type="Pfam" id="PF06730">
    <property type="entry name" value="FAM92"/>
    <property type="match status" value="1"/>
</dbReference>
<dbReference type="SUPFAM" id="SSF103657">
    <property type="entry name" value="BAR/IMD domain-like"/>
    <property type="match status" value="1"/>
</dbReference>
<gene>
    <name type="primary">cibar1</name>
    <name type="synonym">fam92a</name>
    <name type="synonym">fam92a1</name>
    <name type="ORF">si:dkey-98l21.1</name>
    <name type="ORF">zgc:100998</name>
</gene>
<evidence type="ECO:0000250" key="1">
    <source>
        <dbReference type="UniProtKB" id="A1XBS5"/>
    </source>
</evidence>
<evidence type="ECO:0000250" key="2">
    <source>
        <dbReference type="UniProtKB" id="Q8BP22"/>
    </source>
</evidence>
<evidence type="ECO:0000255" key="3"/>
<evidence type="ECO:0000256" key="4">
    <source>
        <dbReference type="SAM" id="MobiDB-lite"/>
    </source>
</evidence>
<evidence type="ECO:0000305" key="5"/>